<proteinExistence type="evidence at protein level"/>
<name>ACLP_MOUSE</name>
<accession>P83855</accession>
<reference evidence="1" key="1">
    <citation type="submission" date="2004-03" db="UniProtKB">
        <title>Identification of a sperm adenylate cyclase.</title>
        <authorList>
            <person name="Kumar G.P."/>
            <person name="Laloraya M."/>
        </authorList>
    </citation>
    <scope>PROTEIN SEQUENCE</scope>
    <source>
        <tissue evidence="1">Testis</tissue>
    </source>
</reference>
<organism evidence="1">
    <name type="scientific">Mus musculus</name>
    <name type="common">Mouse</name>
    <dbReference type="NCBI Taxonomy" id="10090"/>
    <lineage>
        <taxon>Eukaryota</taxon>
        <taxon>Metazoa</taxon>
        <taxon>Chordata</taxon>
        <taxon>Craniata</taxon>
        <taxon>Vertebrata</taxon>
        <taxon>Euteleostomi</taxon>
        <taxon>Mammalia</taxon>
        <taxon>Eutheria</taxon>
        <taxon>Euarchontoglires</taxon>
        <taxon>Glires</taxon>
        <taxon>Rodentia</taxon>
        <taxon>Myomorpha</taxon>
        <taxon>Muroidea</taxon>
        <taxon>Muridae</taxon>
        <taxon>Murinae</taxon>
        <taxon>Mus</taxon>
        <taxon>Mus</taxon>
    </lineage>
</organism>
<keyword id="KW-0067">ATP-binding</keyword>
<keyword id="KW-0903">Direct protein sequencing</keyword>
<keyword id="KW-0456">Lyase</keyword>
<keyword id="KW-0547">Nucleotide-binding</keyword>
<keyword id="KW-1185">Reference proteome</keyword>
<protein>
    <recommendedName>
        <fullName>Putative sperm adenylate cyclase</fullName>
        <ecNumber>4.6.1.1</ecNumber>
    </recommendedName>
</protein>
<sequence length="21" mass="2502">GVYMEIGRCRXEAXRRRKEAV</sequence>
<feature type="chain" id="PRO_0000195712" description="Putative sperm adenylate cyclase">
    <location>
        <begin position="1"/>
        <end position="21" status="greater than"/>
    </location>
</feature>
<feature type="non-terminal residue" evidence="1">
    <location>
        <position position="21"/>
    </location>
</feature>
<comment type="catalytic activity">
    <reaction evidence="1">
        <text>ATP = 3',5'-cyclic AMP + diphosphate</text>
        <dbReference type="Rhea" id="RHEA:15389"/>
        <dbReference type="ChEBI" id="CHEBI:30616"/>
        <dbReference type="ChEBI" id="CHEBI:33019"/>
        <dbReference type="ChEBI" id="CHEBI:58165"/>
        <dbReference type="EC" id="4.6.1.1"/>
    </reaction>
</comment>
<dbReference type="EC" id="4.6.1.1"/>
<dbReference type="InParanoid" id="P83855"/>
<dbReference type="Proteomes" id="UP000000589">
    <property type="component" value="Unplaced"/>
</dbReference>
<dbReference type="GO" id="GO:0004016">
    <property type="term" value="F:adenylate cyclase activity"/>
    <property type="evidence" value="ECO:0007669"/>
    <property type="project" value="UniProtKB-EC"/>
</dbReference>
<dbReference type="GO" id="GO:0005524">
    <property type="term" value="F:ATP binding"/>
    <property type="evidence" value="ECO:0007669"/>
    <property type="project" value="UniProtKB-KW"/>
</dbReference>
<evidence type="ECO:0000305" key="1"/>